<sequence>MARKRQDVRPIVKLKSTAGTGFTYVTRKNRRNDPDRIVLKKYDPIIRRHTEFREER</sequence>
<comment type="similarity">
    <text evidence="1">Belongs to the bacterial ribosomal protein bL33 family.</text>
</comment>
<gene>
    <name evidence="1" type="primary">rpmG</name>
    <name type="synonym">twt114</name>
    <name type="ordered locus">TWT_114</name>
</gene>
<feature type="chain" id="PRO_1000004209" description="Large ribosomal subunit protein bL33">
    <location>
        <begin position="1"/>
        <end position="56"/>
    </location>
</feature>
<organism>
    <name type="scientific">Tropheryma whipplei (strain Twist)</name>
    <name type="common">Whipple's bacillus</name>
    <dbReference type="NCBI Taxonomy" id="203267"/>
    <lineage>
        <taxon>Bacteria</taxon>
        <taxon>Bacillati</taxon>
        <taxon>Actinomycetota</taxon>
        <taxon>Actinomycetes</taxon>
        <taxon>Micrococcales</taxon>
        <taxon>Tropherymataceae</taxon>
        <taxon>Tropheryma</taxon>
    </lineage>
</organism>
<proteinExistence type="inferred from homology"/>
<protein>
    <recommendedName>
        <fullName evidence="1">Large ribosomal subunit protein bL33</fullName>
    </recommendedName>
    <alternativeName>
        <fullName evidence="2">50S ribosomal protein L33</fullName>
    </alternativeName>
</protein>
<keyword id="KW-1185">Reference proteome</keyword>
<keyword id="KW-0687">Ribonucleoprotein</keyword>
<keyword id="KW-0689">Ribosomal protein</keyword>
<reference key="1">
    <citation type="journal article" date="2003" name="Genome Res.">
        <title>Tropheryma whipplei twist: a human pathogenic Actinobacteria with a reduced genome.</title>
        <authorList>
            <person name="Raoult D."/>
            <person name="Ogata H."/>
            <person name="Audic S."/>
            <person name="Robert C."/>
            <person name="Suhre K."/>
            <person name="Drancourt M."/>
            <person name="Claverie J.-M."/>
        </authorList>
    </citation>
    <scope>NUCLEOTIDE SEQUENCE [LARGE SCALE GENOMIC DNA]</scope>
    <source>
        <strain>Twist</strain>
    </source>
</reference>
<evidence type="ECO:0000255" key="1">
    <source>
        <dbReference type="HAMAP-Rule" id="MF_00294"/>
    </source>
</evidence>
<evidence type="ECO:0000305" key="2"/>
<name>RL33_TROWT</name>
<dbReference type="EMBL" id="AE014184">
    <property type="protein sequence ID" value="AAO44211.1"/>
    <property type="molecule type" value="Genomic_DNA"/>
</dbReference>
<dbReference type="RefSeq" id="WP_011096087.1">
    <property type="nucleotide sequence ID" value="NC_004572.3"/>
</dbReference>
<dbReference type="SMR" id="Q83GW7"/>
<dbReference type="STRING" id="203267.TWT_114"/>
<dbReference type="GeneID" id="67387898"/>
<dbReference type="KEGG" id="twh:TWT_114"/>
<dbReference type="eggNOG" id="COG0267">
    <property type="taxonomic scope" value="Bacteria"/>
</dbReference>
<dbReference type="HOGENOM" id="CLU_190949_1_1_11"/>
<dbReference type="OrthoDB" id="21586at2"/>
<dbReference type="Proteomes" id="UP000002200">
    <property type="component" value="Chromosome"/>
</dbReference>
<dbReference type="GO" id="GO:0022625">
    <property type="term" value="C:cytosolic large ribosomal subunit"/>
    <property type="evidence" value="ECO:0007669"/>
    <property type="project" value="TreeGrafter"/>
</dbReference>
<dbReference type="GO" id="GO:0003735">
    <property type="term" value="F:structural constituent of ribosome"/>
    <property type="evidence" value="ECO:0007669"/>
    <property type="project" value="InterPro"/>
</dbReference>
<dbReference type="GO" id="GO:0006412">
    <property type="term" value="P:translation"/>
    <property type="evidence" value="ECO:0007669"/>
    <property type="project" value="UniProtKB-UniRule"/>
</dbReference>
<dbReference type="Gene3D" id="2.20.28.120">
    <property type="entry name" value="Ribosomal protein L33"/>
    <property type="match status" value="1"/>
</dbReference>
<dbReference type="HAMAP" id="MF_00294">
    <property type="entry name" value="Ribosomal_bL33"/>
    <property type="match status" value="1"/>
</dbReference>
<dbReference type="InterPro" id="IPR001705">
    <property type="entry name" value="Ribosomal_bL33"/>
</dbReference>
<dbReference type="InterPro" id="IPR018264">
    <property type="entry name" value="Ribosomal_bL33_CS"/>
</dbReference>
<dbReference type="InterPro" id="IPR038584">
    <property type="entry name" value="Ribosomal_bL33_sf"/>
</dbReference>
<dbReference type="InterPro" id="IPR011332">
    <property type="entry name" value="Ribosomal_zn-bd"/>
</dbReference>
<dbReference type="NCBIfam" id="NF001860">
    <property type="entry name" value="PRK00595.1"/>
    <property type="match status" value="1"/>
</dbReference>
<dbReference type="NCBIfam" id="TIGR01023">
    <property type="entry name" value="rpmG_bact"/>
    <property type="match status" value="1"/>
</dbReference>
<dbReference type="PANTHER" id="PTHR15238">
    <property type="entry name" value="54S RIBOSOMAL PROTEIN L39, MITOCHONDRIAL"/>
    <property type="match status" value="1"/>
</dbReference>
<dbReference type="PANTHER" id="PTHR15238:SF1">
    <property type="entry name" value="LARGE RIBOSOMAL SUBUNIT PROTEIN BL33M"/>
    <property type="match status" value="1"/>
</dbReference>
<dbReference type="Pfam" id="PF00471">
    <property type="entry name" value="Ribosomal_L33"/>
    <property type="match status" value="1"/>
</dbReference>
<dbReference type="SUPFAM" id="SSF57829">
    <property type="entry name" value="Zn-binding ribosomal proteins"/>
    <property type="match status" value="1"/>
</dbReference>
<dbReference type="PROSITE" id="PS00582">
    <property type="entry name" value="RIBOSOMAL_L33"/>
    <property type="match status" value="1"/>
</dbReference>
<accession>Q83GW7</accession>